<feature type="chain" id="PRO_0000351376" description="Autoinducer 2 import system permease protein LsrD">
    <location>
        <begin position="1"/>
        <end position="332"/>
    </location>
</feature>
<feature type="transmembrane region" description="Helical" evidence="2">
    <location>
        <begin position="7"/>
        <end position="27"/>
    </location>
</feature>
<feature type="transmembrane region" description="Helical" evidence="2">
    <location>
        <begin position="45"/>
        <end position="65"/>
    </location>
</feature>
<feature type="transmembrane region" description="Helical" evidence="2">
    <location>
        <begin position="70"/>
        <end position="90"/>
    </location>
</feature>
<feature type="transmembrane region" description="Helical" evidence="2">
    <location>
        <begin position="91"/>
        <end position="111"/>
    </location>
</feature>
<feature type="transmembrane region" description="Helical" evidence="2">
    <location>
        <begin position="118"/>
        <end position="138"/>
    </location>
</feature>
<feature type="transmembrane region" description="Helical" evidence="2">
    <location>
        <begin position="162"/>
        <end position="182"/>
    </location>
</feature>
<feature type="transmembrane region" description="Helical" evidence="2">
    <location>
        <begin position="216"/>
        <end position="236"/>
    </location>
</feature>
<feature type="transmembrane region" description="Helical" evidence="2">
    <location>
        <begin position="240"/>
        <end position="260"/>
    </location>
</feature>
<feature type="transmembrane region" description="Helical" evidence="2">
    <location>
        <begin position="261"/>
        <end position="281"/>
    </location>
</feature>
<feature type="transmembrane region" description="Helical" evidence="2">
    <location>
        <begin position="288"/>
        <end position="308"/>
    </location>
</feature>
<gene>
    <name type="primary">lsrD</name>
    <name type="ordered locus">STY3794</name>
    <name type="ordered locus">t3542</name>
</gene>
<organism>
    <name type="scientific">Salmonella typhi</name>
    <dbReference type="NCBI Taxonomy" id="90370"/>
    <lineage>
        <taxon>Bacteria</taxon>
        <taxon>Pseudomonadati</taxon>
        <taxon>Pseudomonadota</taxon>
        <taxon>Gammaproteobacteria</taxon>
        <taxon>Enterobacterales</taxon>
        <taxon>Enterobacteriaceae</taxon>
        <taxon>Salmonella</taxon>
    </lineage>
</organism>
<comment type="function">
    <text evidence="1">Part of the ABC transporter complex LsrABCD involved in autoinducer 2 (AI-2) import. Probably responsible for the translocation of the substrate across the membrane (By similarity).</text>
</comment>
<comment type="subunit">
    <text evidence="1">The complex is composed of two ATP-binding proteins (LsrA), two transmembrane proteins (LsrC and LsrD) and a solute-binding protein (LsrB).</text>
</comment>
<comment type="subcellular location">
    <subcellularLocation>
        <location evidence="1">Cell inner membrane</location>
        <topology evidence="1">Multi-pass membrane protein</topology>
    </subcellularLocation>
</comment>
<comment type="similarity">
    <text evidence="3">Belongs to the binding-protein-dependent transport system permease family. AraH/RbsC subfamily.</text>
</comment>
<comment type="sequence caution" evidence="3">
    <conflict type="erroneous initiation">
        <sequence resource="EMBL-CDS" id="AAO71049"/>
    </conflict>
</comment>
<comment type="sequence caution" evidence="3">
    <conflict type="erroneous initiation">
        <sequence resource="EMBL-CDS" id="CAD09547"/>
    </conflict>
</comment>
<sequence>MNPWRRYSWEIALAALLIFEILAFGLINPRLLDINVLLFSTSDFICIGIVALPLTMVIVSGGMDISFGSTIGLCAITLGVLFQLGMPLPLAIIITLLLGAICGLINAGLIIYTGVNPLVITLGTMYLFGGSALLLSGMAGATGYEGIGGFPTAFTDFANISFLGIPMPLIFFLVCCLFFWLLMHRTHMGRNVFLIGQSARVAQYSAIPVNRTLYTVYAMTGCASAIAAVLLVSYFGSARSDLGASFLMPTITAVVLGGANIYGGSGSIMGSALAALLVGFLQQGLQMAGVPNQISSALSGALLIVVVVGRSVSLHRHQILEWYSRRRNAHQA</sequence>
<accession>Q8Z2X7</accession>
<accession>Q7C6A0</accession>
<name>LSRD_SALTI</name>
<keyword id="KW-0997">Cell inner membrane</keyword>
<keyword id="KW-1003">Cell membrane</keyword>
<keyword id="KW-0472">Membrane</keyword>
<keyword id="KW-0812">Transmembrane</keyword>
<keyword id="KW-1133">Transmembrane helix</keyword>
<keyword id="KW-0813">Transport</keyword>
<dbReference type="EMBL" id="AE014613">
    <property type="protein sequence ID" value="AAO71049.1"/>
    <property type="status" value="ALT_INIT"/>
    <property type="molecule type" value="Genomic_DNA"/>
</dbReference>
<dbReference type="EMBL" id="AL513382">
    <property type="protein sequence ID" value="CAD09547.1"/>
    <property type="status" value="ALT_INIT"/>
    <property type="molecule type" value="Genomic_DNA"/>
</dbReference>
<dbReference type="RefSeq" id="NP_457976.1">
    <property type="nucleotide sequence ID" value="NC_003198.1"/>
</dbReference>
<dbReference type="STRING" id="220341.gene:17587658"/>
<dbReference type="KEGG" id="stt:t3542"/>
<dbReference type="KEGG" id="sty:STY3794"/>
<dbReference type="PATRIC" id="fig|220341.7.peg.3872"/>
<dbReference type="eggNOG" id="COG1172">
    <property type="taxonomic scope" value="Bacteria"/>
</dbReference>
<dbReference type="HOGENOM" id="CLU_028880_0_0_6"/>
<dbReference type="OMA" id="NTVVFQF"/>
<dbReference type="Proteomes" id="UP000000541">
    <property type="component" value="Chromosome"/>
</dbReference>
<dbReference type="Proteomes" id="UP000002670">
    <property type="component" value="Chromosome"/>
</dbReference>
<dbReference type="GO" id="GO:0005886">
    <property type="term" value="C:plasma membrane"/>
    <property type="evidence" value="ECO:0007669"/>
    <property type="project" value="UniProtKB-SubCell"/>
</dbReference>
<dbReference type="GO" id="GO:0022857">
    <property type="term" value="F:transmembrane transporter activity"/>
    <property type="evidence" value="ECO:0007669"/>
    <property type="project" value="InterPro"/>
</dbReference>
<dbReference type="CDD" id="cd06579">
    <property type="entry name" value="TM_PBP1_transp_AraH_like"/>
    <property type="match status" value="1"/>
</dbReference>
<dbReference type="InterPro" id="IPR001851">
    <property type="entry name" value="ABC_transp_permease"/>
</dbReference>
<dbReference type="NCBIfam" id="NF011612">
    <property type="entry name" value="PRK15038.1"/>
    <property type="match status" value="1"/>
</dbReference>
<dbReference type="PANTHER" id="PTHR32196">
    <property type="entry name" value="ABC TRANSPORTER PERMEASE PROTEIN YPHD-RELATED-RELATED"/>
    <property type="match status" value="1"/>
</dbReference>
<dbReference type="PANTHER" id="PTHR32196:SF71">
    <property type="entry name" value="AUTOINDUCER 2 IMPORT SYSTEM PERMEASE PROTEIN LSRD"/>
    <property type="match status" value="1"/>
</dbReference>
<dbReference type="Pfam" id="PF02653">
    <property type="entry name" value="BPD_transp_2"/>
    <property type="match status" value="1"/>
</dbReference>
<reference key="1">
    <citation type="journal article" date="2001" name="Nature">
        <title>Complete genome sequence of a multiple drug resistant Salmonella enterica serovar Typhi CT18.</title>
        <authorList>
            <person name="Parkhill J."/>
            <person name="Dougan G."/>
            <person name="James K.D."/>
            <person name="Thomson N.R."/>
            <person name="Pickard D."/>
            <person name="Wain J."/>
            <person name="Churcher C.M."/>
            <person name="Mungall K.L."/>
            <person name="Bentley S.D."/>
            <person name="Holden M.T.G."/>
            <person name="Sebaihia M."/>
            <person name="Baker S."/>
            <person name="Basham D."/>
            <person name="Brooks K."/>
            <person name="Chillingworth T."/>
            <person name="Connerton P."/>
            <person name="Cronin A."/>
            <person name="Davis P."/>
            <person name="Davies R.M."/>
            <person name="Dowd L."/>
            <person name="White N."/>
            <person name="Farrar J."/>
            <person name="Feltwell T."/>
            <person name="Hamlin N."/>
            <person name="Haque A."/>
            <person name="Hien T.T."/>
            <person name="Holroyd S."/>
            <person name="Jagels K."/>
            <person name="Krogh A."/>
            <person name="Larsen T.S."/>
            <person name="Leather S."/>
            <person name="Moule S."/>
            <person name="O'Gaora P."/>
            <person name="Parry C."/>
            <person name="Quail M.A."/>
            <person name="Rutherford K.M."/>
            <person name="Simmonds M."/>
            <person name="Skelton J."/>
            <person name="Stevens K."/>
            <person name="Whitehead S."/>
            <person name="Barrell B.G."/>
        </authorList>
    </citation>
    <scope>NUCLEOTIDE SEQUENCE [LARGE SCALE GENOMIC DNA]</scope>
    <source>
        <strain>CT18</strain>
    </source>
</reference>
<reference key="2">
    <citation type="journal article" date="2003" name="J. Bacteriol.">
        <title>Comparative genomics of Salmonella enterica serovar Typhi strains Ty2 and CT18.</title>
        <authorList>
            <person name="Deng W."/>
            <person name="Liou S.-R."/>
            <person name="Plunkett G. III"/>
            <person name="Mayhew G.F."/>
            <person name="Rose D.J."/>
            <person name="Burland V."/>
            <person name="Kodoyianni V."/>
            <person name="Schwartz D.C."/>
            <person name="Blattner F.R."/>
        </authorList>
    </citation>
    <scope>NUCLEOTIDE SEQUENCE [LARGE SCALE GENOMIC DNA]</scope>
    <source>
        <strain>ATCC 700931 / Ty2</strain>
    </source>
</reference>
<protein>
    <recommendedName>
        <fullName>Autoinducer 2 import system permease protein LsrD</fullName>
        <shortName>AI-2 import system permease protein LsrD</shortName>
    </recommendedName>
</protein>
<evidence type="ECO:0000250" key="1"/>
<evidence type="ECO:0000255" key="2"/>
<evidence type="ECO:0000305" key="3"/>
<proteinExistence type="inferred from homology"/>